<protein>
    <recommendedName>
        <fullName evidence="1">Bifunctional protein HldE</fullName>
    </recommendedName>
    <domain>
        <recommendedName>
            <fullName evidence="1">D-beta-D-heptose 7-phosphate kinase</fullName>
            <ecNumber evidence="1">2.7.1.167</ecNumber>
        </recommendedName>
        <alternativeName>
            <fullName evidence="1">D-beta-D-heptose 7-phosphotransferase</fullName>
        </alternativeName>
        <alternativeName>
            <fullName evidence="1">D-glycero-beta-D-manno-heptose-7-phosphate kinase</fullName>
        </alternativeName>
    </domain>
    <domain>
        <recommendedName>
            <fullName evidence="1">D-beta-D-heptose 1-phosphate adenylyltransferase</fullName>
            <ecNumber evidence="1">2.7.7.70</ecNumber>
        </recommendedName>
        <alternativeName>
            <fullName evidence="1">D-glycero-beta-D-manno-heptose 1-phosphate adenylyltransferase</fullName>
        </alternativeName>
    </domain>
</protein>
<comment type="function">
    <text evidence="1">Catalyzes the phosphorylation of D-glycero-D-manno-heptose 7-phosphate at the C-1 position to selectively form D-glycero-beta-D-manno-heptose-1,7-bisphosphate.</text>
</comment>
<comment type="function">
    <text evidence="1">Catalyzes the ADP transfer from ATP to D-glycero-beta-D-manno-heptose 1-phosphate, yielding ADP-D-glycero-beta-D-manno-heptose.</text>
</comment>
<comment type="catalytic activity">
    <reaction evidence="1">
        <text>D-glycero-beta-D-manno-heptose 7-phosphate + ATP = D-glycero-beta-D-manno-heptose 1,7-bisphosphate + ADP + H(+)</text>
        <dbReference type="Rhea" id="RHEA:27473"/>
        <dbReference type="ChEBI" id="CHEBI:15378"/>
        <dbReference type="ChEBI" id="CHEBI:30616"/>
        <dbReference type="ChEBI" id="CHEBI:60204"/>
        <dbReference type="ChEBI" id="CHEBI:60208"/>
        <dbReference type="ChEBI" id="CHEBI:456216"/>
        <dbReference type="EC" id="2.7.1.167"/>
    </reaction>
</comment>
<comment type="catalytic activity">
    <reaction evidence="1">
        <text>D-glycero-beta-D-manno-heptose 1-phosphate + ATP + H(+) = ADP-D-glycero-beta-D-manno-heptose + diphosphate</text>
        <dbReference type="Rhea" id="RHEA:27465"/>
        <dbReference type="ChEBI" id="CHEBI:15378"/>
        <dbReference type="ChEBI" id="CHEBI:30616"/>
        <dbReference type="ChEBI" id="CHEBI:33019"/>
        <dbReference type="ChEBI" id="CHEBI:59967"/>
        <dbReference type="ChEBI" id="CHEBI:61593"/>
        <dbReference type="EC" id="2.7.7.70"/>
    </reaction>
</comment>
<comment type="pathway">
    <text evidence="1">Nucleotide-sugar biosynthesis; ADP-L-glycero-beta-D-manno-heptose biosynthesis; ADP-L-glycero-beta-D-manno-heptose from D-glycero-beta-D-manno-heptose 7-phosphate: step 1/4.</text>
</comment>
<comment type="pathway">
    <text evidence="1">Nucleotide-sugar biosynthesis; ADP-L-glycero-beta-D-manno-heptose biosynthesis; ADP-L-glycero-beta-D-manno-heptose from D-glycero-beta-D-manno-heptose 7-phosphate: step 3/4.</text>
</comment>
<comment type="subunit">
    <text evidence="1">Homodimer.</text>
</comment>
<comment type="similarity">
    <text evidence="1">In the N-terminal section; belongs to the carbohydrate kinase PfkB family.</text>
</comment>
<comment type="similarity">
    <text evidence="1">In the C-terminal section; belongs to the cytidylyltransferase family.</text>
</comment>
<accession>A1AFX4</accession>
<evidence type="ECO:0000255" key="1">
    <source>
        <dbReference type="HAMAP-Rule" id="MF_01603"/>
    </source>
</evidence>
<proteinExistence type="inferred from homology"/>
<dbReference type="EC" id="2.7.1.167" evidence="1"/>
<dbReference type="EC" id="2.7.7.70" evidence="1"/>
<dbReference type="EMBL" id="CP000468">
    <property type="protein sequence ID" value="ABJ02564.1"/>
    <property type="molecule type" value="Genomic_DNA"/>
</dbReference>
<dbReference type="RefSeq" id="WP_000869177.1">
    <property type="nucleotide sequence ID" value="NZ_CADILS010000003.1"/>
</dbReference>
<dbReference type="SMR" id="A1AFX4"/>
<dbReference type="KEGG" id="ecv:APECO1_3362"/>
<dbReference type="HOGENOM" id="CLU_021150_2_1_6"/>
<dbReference type="UniPathway" id="UPA00356">
    <property type="reaction ID" value="UER00437"/>
</dbReference>
<dbReference type="UniPathway" id="UPA00356">
    <property type="reaction ID" value="UER00439"/>
</dbReference>
<dbReference type="Proteomes" id="UP000008216">
    <property type="component" value="Chromosome"/>
</dbReference>
<dbReference type="GO" id="GO:0005829">
    <property type="term" value="C:cytosol"/>
    <property type="evidence" value="ECO:0007669"/>
    <property type="project" value="TreeGrafter"/>
</dbReference>
<dbReference type="GO" id="GO:0005524">
    <property type="term" value="F:ATP binding"/>
    <property type="evidence" value="ECO:0007669"/>
    <property type="project" value="UniProtKB-UniRule"/>
</dbReference>
<dbReference type="GO" id="GO:0033785">
    <property type="term" value="F:heptose 7-phosphate kinase activity"/>
    <property type="evidence" value="ECO:0007669"/>
    <property type="project" value="UniProtKB-UniRule"/>
</dbReference>
<dbReference type="GO" id="GO:0033786">
    <property type="term" value="F:heptose-1-phosphate adenylyltransferase activity"/>
    <property type="evidence" value="ECO:0007669"/>
    <property type="project" value="UniProtKB-UniRule"/>
</dbReference>
<dbReference type="GO" id="GO:0016773">
    <property type="term" value="F:phosphotransferase activity, alcohol group as acceptor"/>
    <property type="evidence" value="ECO:0007669"/>
    <property type="project" value="InterPro"/>
</dbReference>
<dbReference type="GO" id="GO:0097171">
    <property type="term" value="P:ADP-L-glycero-beta-D-manno-heptose biosynthetic process"/>
    <property type="evidence" value="ECO:0007669"/>
    <property type="project" value="UniProtKB-UniPathway"/>
</dbReference>
<dbReference type="CDD" id="cd01172">
    <property type="entry name" value="RfaE_like"/>
    <property type="match status" value="1"/>
</dbReference>
<dbReference type="FunFam" id="3.40.1190.20:FF:000002">
    <property type="entry name" value="Bifunctional protein HldE"/>
    <property type="match status" value="1"/>
</dbReference>
<dbReference type="FunFam" id="3.40.50.620:FF:000028">
    <property type="entry name" value="Bifunctional protein HldE"/>
    <property type="match status" value="1"/>
</dbReference>
<dbReference type="Gene3D" id="3.40.1190.20">
    <property type="match status" value="1"/>
</dbReference>
<dbReference type="Gene3D" id="3.40.50.620">
    <property type="entry name" value="HUPs"/>
    <property type="match status" value="1"/>
</dbReference>
<dbReference type="HAMAP" id="MF_01603">
    <property type="entry name" value="HldE"/>
    <property type="match status" value="1"/>
</dbReference>
<dbReference type="InterPro" id="IPR023030">
    <property type="entry name" value="Bifunc_HldE"/>
</dbReference>
<dbReference type="InterPro" id="IPR002173">
    <property type="entry name" value="Carboh/pur_kinase_PfkB_CS"/>
</dbReference>
<dbReference type="InterPro" id="IPR004821">
    <property type="entry name" value="Cyt_trans-like"/>
</dbReference>
<dbReference type="InterPro" id="IPR011611">
    <property type="entry name" value="PfkB_dom"/>
</dbReference>
<dbReference type="InterPro" id="IPR011913">
    <property type="entry name" value="RfaE_dom_I"/>
</dbReference>
<dbReference type="InterPro" id="IPR011914">
    <property type="entry name" value="RfaE_dom_II"/>
</dbReference>
<dbReference type="InterPro" id="IPR029056">
    <property type="entry name" value="Ribokinase-like"/>
</dbReference>
<dbReference type="InterPro" id="IPR014729">
    <property type="entry name" value="Rossmann-like_a/b/a_fold"/>
</dbReference>
<dbReference type="NCBIfam" id="TIGR00125">
    <property type="entry name" value="cyt_tran_rel"/>
    <property type="match status" value="1"/>
</dbReference>
<dbReference type="NCBIfam" id="NF008454">
    <property type="entry name" value="PRK11316.1"/>
    <property type="match status" value="1"/>
</dbReference>
<dbReference type="NCBIfam" id="TIGR02198">
    <property type="entry name" value="rfaE_dom_I"/>
    <property type="match status" value="1"/>
</dbReference>
<dbReference type="NCBIfam" id="TIGR02199">
    <property type="entry name" value="rfaE_dom_II"/>
    <property type="match status" value="1"/>
</dbReference>
<dbReference type="PANTHER" id="PTHR46969">
    <property type="entry name" value="BIFUNCTIONAL PROTEIN HLDE"/>
    <property type="match status" value="1"/>
</dbReference>
<dbReference type="PANTHER" id="PTHR46969:SF1">
    <property type="entry name" value="BIFUNCTIONAL PROTEIN HLDE"/>
    <property type="match status" value="1"/>
</dbReference>
<dbReference type="Pfam" id="PF01467">
    <property type="entry name" value="CTP_transf_like"/>
    <property type="match status" value="1"/>
</dbReference>
<dbReference type="Pfam" id="PF00294">
    <property type="entry name" value="PfkB"/>
    <property type="match status" value="1"/>
</dbReference>
<dbReference type="SUPFAM" id="SSF52374">
    <property type="entry name" value="Nucleotidylyl transferase"/>
    <property type="match status" value="1"/>
</dbReference>
<dbReference type="SUPFAM" id="SSF53613">
    <property type="entry name" value="Ribokinase-like"/>
    <property type="match status" value="1"/>
</dbReference>
<dbReference type="PROSITE" id="PS00583">
    <property type="entry name" value="PFKB_KINASES_1"/>
    <property type="match status" value="1"/>
</dbReference>
<keyword id="KW-0007">Acetylation</keyword>
<keyword id="KW-0067">ATP-binding</keyword>
<keyword id="KW-0119">Carbohydrate metabolism</keyword>
<keyword id="KW-0418">Kinase</keyword>
<keyword id="KW-0511">Multifunctional enzyme</keyword>
<keyword id="KW-0547">Nucleotide-binding</keyword>
<keyword id="KW-0548">Nucleotidyltransferase</keyword>
<keyword id="KW-1185">Reference proteome</keyword>
<keyword id="KW-0808">Transferase</keyword>
<name>HLDE_ECOK1</name>
<sequence>MKVTLPEFERAGVMVVGDVMLDRYWYGPTSRISPEAPVPVVKVNTIEERPGGAANVAMNIASLGANARLVGLTGIDDAARALSKSLADVNVKCDFVSVPTHPTITKLRVLSRNQQLIRLDFEEGFEGVDPQPLHERINQALSSIGALVLSDYAKGALASVQQMIQLARKAGVPVLIDPKGTDFERYRGATLLTPNLSEFEAVVGKCKTEEEIVERGMKLIADYELSALLVTRSEQGMSLLQPGKAPLHMPTQAQEVYDVTGAGDTVIGVLAATLAAGNSLEEACFFANAAAGVVVGKLGTSTVSPIELENAVRGRADTGFGVMTEEELKLAVAAARKRGEKVVMTNGVFDILHAGHVSYLANARKLGDRLIVAVNSDASTKRLKGDSRPVNPLEQRMIVLGALEAVDWVVSFEEDTPQRLIAGILPDLLVKGGDYKPEEIAGSKEVWANGGEVLVLNFEDGCSTTNIIKKIQLDKKG</sequence>
<organism>
    <name type="scientific">Escherichia coli O1:K1 / APEC</name>
    <dbReference type="NCBI Taxonomy" id="405955"/>
    <lineage>
        <taxon>Bacteria</taxon>
        <taxon>Pseudomonadati</taxon>
        <taxon>Pseudomonadota</taxon>
        <taxon>Gammaproteobacteria</taxon>
        <taxon>Enterobacterales</taxon>
        <taxon>Enterobacteriaceae</taxon>
        <taxon>Escherichia</taxon>
    </lineage>
</organism>
<reference key="1">
    <citation type="journal article" date="2007" name="J. Bacteriol.">
        <title>The genome sequence of avian pathogenic Escherichia coli strain O1:K1:H7 shares strong similarities with human extraintestinal pathogenic E. coli genomes.</title>
        <authorList>
            <person name="Johnson T.J."/>
            <person name="Kariyawasam S."/>
            <person name="Wannemuehler Y."/>
            <person name="Mangiamele P."/>
            <person name="Johnson S.J."/>
            <person name="Doetkott C."/>
            <person name="Skyberg J.A."/>
            <person name="Lynne A.M."/>
            <person name="Johnson J.R."/>
            <person name="Nolan L.K."/>
        </authorList>
    </citation>
    <scope>NUCLEOTIDE SEQUENCE [LARGE SCALE GENOMIC DNA]</scope>
</reference>
<gene>
    <name evidence="1" type="primary">hldE</name>
    <name type="synonym">rfaE</name>
    <name type="ordered locus">Ecok1_30700</name>
    <name type="ORF">APECO1_3362</name>
</gene>
<feature type="chain" id="PRO_0000291672" description="Bifunctional protein HldE">
    <location>
        <begin position="1"/>
        <end position="477"/>
    </location>
</feature>
<feature type="region of interest" description="Ribokinase">
    <location>
        <begin position="1"/>
        <end position="318"/>
    </location>
</feature>
<feature type="region of interest" description="Cytidylyltransferase">
    <location>
        <begin position="344"/>
        <end position="477"/>
    </location>
</feature>
<feature type="active site" evidence="1">
    <location>
        <position position="264"/>
    </location>
</feature>
<feature type="binding site" evidence="1">
    <location>
        <begin position="195"/>
        <end position="198"/>
    </location>
    <ligand>
        <name>ATP</name>
        <dbReference type="ChEBI" id="CHEBI:30616"/>
    </ligand>
</feature>
<feature type="modified residue" description="N6-acetyllysine" evidence="1">
    <location>
        <position position="179"/>
    </location>
</feature>